<keyword id="KW-0150">Chloroplast</keyword>
<keyword id="KW-0240">DNA-directed RNA polymerase</keyword>
<keyword id="KW-0479">Metal-binding</keyword>
<keyword id="KW-0548">Nucleotidyltransferase</keyword>
<keyword id="KW-0934">Plastid</keyword>
<keyword id="KW-0804">Transcription</keyword>
<keyword id="KW-0808">Transferase</keyword>
<keyword id="KW-0862">Zinc</keyword>
<proteinExistence type="inferred from homology"/>
<feature type="chain" id="PRO_0000353568" description="DNA-directed RNA polymerase subunit beta''">
    <location>
        <begin position="1"/>
        <end position="1371"/>
    </location>
</feature>
<feature type="binding site" evidence="1">
    <location>
        <position position="220"/>
    </location>
    <ligand>
        <name>Zn(2+)</name>
        <dbReference type="ChEBI" id="CHEBI:29105"/>
    </ligand>
</feature>
<feature type="binding site" evidence="1">
    <location>
        <position position="293"/>
    </location>
    <ligand>
        <name>Zn(2+)</name>
        <dbReference type="ChEBI" id="CHEBI:29105"/>
    </ligand>
</feature>
<feature type="binding site" evidence="1">
    <location>
        <position position="300"/>
    </location>
    <ligand>
        <name>Zn(2+)</name>
        <dbReference type="ChEBI" id="CHEBI:29105"/>
    </ligand>
</feature>
<feature type="binding site" evidence="1">
    <location>
        <position position="303"/>
    </location>
    <ligand>
        <name>Zn(2+)</name>
        <dbReference type="ChEBI" id="CHEBI:29105"/>
    </ligand>
</feature>
<accession>A4QLI4</accession>
<protein>
    <recommendedName>
        <fullName evidence="1">DNA-directed RNA polymerase subunit beta''</fullName>
        <ecNumber evidence="1">2.7.7.6</ecNumber>
    </recommendedName>
    <alternativeName>
        <fullName evidence="1">PEP</fullName>
    </alternativeName>
    <alternativeName>
        <fullName evidence="1">Plastid-encoded RNA polymerase subunit beta''</fullName>
        <shortName evidence="1">RNA polymerase subunit beta''</shortName>
    </alternativeName>
</protein>
<name>RPOC2_LOBMA</name>
<reference key="1">
    <citation type="submission" date="2007-03" db="EMBL/GenBank/DDBJ databases">
        <title>Sequencing analysis of Lobularia maritima chloroplast DNA.</title>
        <authorList>
            <person name="Hosouchi T."/>
            <person name="Tsuruoka H."/>
            <person name="Kotani H."/>
        </authorList>
    </citation>
    <scope>NUCLEOTIDE SEQUENCE [LARGE SCALE GENOMIC DNA]</scope>
</reference>
<geneLocation type="chloroplast"/>
<dbReference type="EC" id="2.7.7.6" evidence="1"/>
<dbReference type="EMBL" id="AP009375">
    <property type="protein sequence ID" value="BAF50539.1"/>
    <property type="molecule type" value="Genomic_DNA"/>
</dbReference>
<dbReference type="RefSeq" id="YP_001123715.1">
    <property type="nucleotide sequence ID" value="NC_009274.1"/>
</dbReference>
<dbReference type="SMR" id="A4QLI4"/>
<dbReference type="GeneID" id="4964876"/>
<dbReference type="GO" id="GO:0009507">
    <property type="term" value="C:chloroplast"/>
    <property type="evidence" value="ECO:0007669"/>
    <property type="project" value="UniProtKB-SubCell"/>
</dbReference>
<dbReference type="GO" id="GO:0000428">
    <property type="term" value="C:DNA-directed RNA polymerase complex"/>
    <property type="evidence" value="ECO:0007669"/>
    <property type="project" value="UniProtKB-KW"/>
</dbReference>
<dbReference type="GO" id="GO:0005739">
    <property type="term" value="C:mitochondrion"/>
    <property type="evidence" value="ECO:0007669"/>
    <property type="project" value="GOC"/>
</dbReference>
<dbReference type="GO" id="GO:0003677">
    <property type="term" value="F:DNA binding"/>
    <property type="evidence" value="ECO:0007669"/>
    <property type="project" value="UniProtKB-UniRule"/>
</dbReference>
<dbReference type="GO" id="GO:0003899">
    <property type="term" value="F:DNA-directed RNA polymerase activity"/>
    <property type="evidence" value="ECO:0007669"/>
    <property type="project" value="UniProtKB-UniRule"/>
</dbReference>
<dbReference type="GO" id="GO:0008270">
    <property type="term" value="F:zinc ion binding"/>
    <property type="evidence" value="ECO:0007669"/>
    <property type="project" value="UniProtKB-UniRule"/>
</dbReference>
<dbReference type="GO" id="GO:0006351">
    <property type="term" value="P:DNA-templated transcription"/>
    <property type="evidence" value="ECO:0007669"/>
    <property type="project" value="UniProtKB-UniRule"/>
</dbReference>
<dbReference type="CDD" id="cd02655">
    <property type="entry name" value="RNAP_beta'_C"/>
    <property type="match status" value="1"/>
</dbReference>
<dbReference type="FunFam" id="1.10.132.30:FF:000002">
    <property type="entry name" value="DNA-directed RNA polymerase subunit beta"/>
    <property type="match status" value="1"/>
</dbReference>
<dbReference type="FunFam" id="1.10.1790.20:FF:000002">
    <property type="entry name" value="DNA-directed RNA polymerase subunit beta"/>
    <property type="match status" value="1"/>
</dbReference>
<dbReference type="FunFam" id="1.10.274.100:FF:000011">
    <property type="entry name" value="DNA-directed RNA polymerase subunit beta"/>
    <property type="match status" value="1"/>
</dbReference>
<dbReference type="Gene3D" id="1.10.132.30">
    <property type="match status" value="1"/>
</dbReference>
<dbReference type="Gene3D" id="1.10.150.390">
    <property type="match status" value="1"/>
</dbReference>
<dbReference type="Gene3D" id="1.10.1790.20">
    <property type="match status" value="1"/>
</dbReference>
<dbReference type="Gene3D" id="1.10.274.100">
    <property type="entry name" value="RNA polymerase Rpb1, domain 3"/>
    <property type="match status" value="1"/>
</dbReference>
<dbReference type="HAMAP" id="MF_01324">
    <property type="entry name" value="RNApol_bact_RpoC2"/>
    <property type="match status" value="1"/>
</dbReference>
<dbReference type="InterPro" id="IPR012756">
    <property type="entry name" value="DNA-dir_RpoC2_beta_pp"/>
</dbReference>
<dbReference type="InterPro" id="IPR050254">
    <property type="entry name" value="RNA_pol_beta''_euk"/>
</dbReference>
<dbReference type="InterPro" id="IPR042102">
    <property type="entry name" value="RNA_pol_Rpb1_3_sf"/>
</dbReference>
<dbReference type="InterPro" id="IPR007083">
    <property type="entry name" value="RNA_pol_Rpb1_4"/>
</dbReference>
<dbReference type="InterPro" id="IPR007081">
    <property type="entry name" value="RNA_pol_Rpb1_5"/>
</dbReference>
<dbReference type="InterPro" id="IPR038120">
    <property type="entry name" value="Rpb1_funnel_sf"/>
</dbReference>
<dbReference type="NCBIfam" id="TIGR02388">
    <property type="entry name" value="rpoC2_cyan"/>
    <property type="match status" value="1"/>
</dbReference>
<dbReference type="PANTHER" id="PTHR34995">
    <property type="entry name" value="DNA-DIRECTED RNA POLYMERASE SUBUNIT BETA"/>
    <property type="match status" value="1"/>
</dbReference>
<dbReference type="PANTHER" id="PTHR34995:SF1">
    <property type="entry name" value="DNA-DIRECTED RNA POLYMERASE SUBUNIT BETA"/>
    <property type="match status" value="1"/>
</dbReference>
<dbReference type="Pfam" id="PF05000">
    <property type="entry name" value="RNA_pol_Rpb1_4"/>
    <property type="match status" value="1"/>
</dbReference>
<dbReference type="Pfam" id="PF04998">
    <property type="entry name" value="RNA_pol_Rpb1_5"/>
    <property type="match status" value="2"/>
</dbReference>
<dbReference type="SUPFAM" id="SSF64484">
    <property type="entry name" value="beta and beta-prime subunits of DNA dependent RNA-polymerase"/>
    <property type="match status" value="1"/>
</dbReference>
<evidence type="ECO:0000255" key="1">
    <source>
        <dbReference type="HAMAP-Rule" id="MF_01324"/>
    </source>
</evidence>
<gene>
    <name evidence="1" type="primary">rpoC2</name>
</gene>
<comment type="function">
    <text evidence="1">DNA-dependent RNA polymerase catalyzes the transcription of DNA into RNA using the four ribonucleoside triphosphates as substrates.</text>
</comment>
<comment type="catalytic activity">
    <reaction evidence="1">
        <text>RNA(n) + a ribonucleoside 5'-triphosphate = RNA(n+1) + diphosphate</text>
        <dbReference type="Rhea" id="RHEA:21248"/>
        <dbReference type="Rhea" id="RHEA-COMP:14527"/>
        <dbReference type="Rhea" id="RHEA-COMP:17342"/>
        <dbReference type="ChEBI" id="CHEBI:33019"/>
        <dbReference type="ChEBI" id="CHEBI:61557"/>
        <dbReference type="ChEBI" id="CHEBI:140395"/>
        <dbReference type="EC" id="2.7.7.6"/>
    </reaction>
</comment>
<comment type="cofactor">
    <cofactor evidence="1">
        <name>Zn(2+)</name>
        <dbReference type="ChEBI" id="CHEBI:29105"/>
    </cofactor>
    <text evidence="1">Binds 1 Zn(2+) ion per subunit.</text>
</comment>
<comment type="subunit">
    <text evidence="1">In plastids the minimal PEP RNA polymerase catalytic core is composed of four subunits: alpha, beta, beta', and beta''. When a (nuclear-encoded) sigma factor is associated with the core the holoenzyme is formed, which can initiate transcription.</text>
</comment>
<comment type="subcellular location">
    <subcellularLocation>
        <location evidence="1">Plastid</location>
        <location evidence="1">Chloroplast</location>
    </subcellularLocation>
</comment>
<comment type="similarity">
    <text evidence="1">Belongs to the RNA polymerase beta' chain family. RpoC2 subfamily.</text>
</comment>
<organism>
    <name type="scientific">Lobularia maritima</name>
    <name type="common">Sweet alyssum</name>
    <name type="synonym">Alyssum maritimum</name>
    <dbReference type="NCBI Taxonomy" id="226051"/>
    <lineage>
        <taxon>Eukaryota</taxon>
        <taxon>Viridiplantae</taxon>
        <taxon>Streptophyta</taxon>
        <taxon>Embryophyta</taxon>
        <taxon>Tracheophyta</taxon>
        <taxon>Spermatophyta</taxon>
        <taxon>Magnoliopsida</taxon>
        <taxon>eudicotyledons</taxon>
        <taxon>Gunneridae</taxon>
        <taxon>Pentapetalae</taxon>
        <taxon>rosids</taxon>
        <taxon>malvids</taxon>
        <taxon>Brassicales</taxon>
        <taxon>Brassicaceae</taxon>
        <taxon>Anastaticeae</taxon>
        <taxon>Lobularia</taxon>
    </lineage>
</organism>
<sequence length="1371" mass="156263">MAERANLVFHNKVIDGTAIKRLISRLIDHFGMAYTSHILDQVKTLGFQQATATSISLGIDDLLTIPSKGWLVQDAEQQSLILEKHHHYGNVHAVEKLRQSIEIWYATSEYLRQEMNLNFRMTDPFNPVHMMSFSGARGNASQVHQLVGMRGLMSDPQGQMIDLPIQSNLREGLSLTEYIISCYGARKGVVDTAVRTSDAGYLTRRLVEVVQHIVVRRTDCGTIRGISVSPRNKNRMMSERIFIQTLIGRVLADDIYIGSRCVAFRNQDLGIGLVNRFITFGTQSISIRTPFTCRSTSWICRLCYGRSPTHGDLVELGEAVGIIAGQSIGEPGTQLTLRTFHTGGVFTGGTAEHVRAPYNGKIKFNEDLVHPTRTRHGHPAFLCYIDLSVIIESEDIIHSVTIPPKSFLLVQNDQYVESEQVIAEIREGTYTFHFKERVRKYIYSDSEGEMHWSTDVSHAPEFTYSNVHLLPKTSHLWILSGSSCESSLIRFSIHKDQDQMNIPFFFVKSKAISSLSVNNDQVSQKFFSSDFSDKKKSGIPNYSELNEIVGTSHYNFIYSAIFHENSDLLAKRRRNRFLIPFQSIQEQEKEFIPHSGISIEIPINGIFRRNSIFAFFDDPRYRRKSCGILKYGTLKADSIIQKEDMIEYRGVQKFKTKYEMKVDRFFFIPEEVHILPESSAIMVQNYSIIGVDTRITLNIRSQVGGLIRVERKKKRIELKIFSGDIHFPDKTDKISRHSGILIPPGRGKTNSKEFKKLKNWIYVQRITPTKKKFFVLVRPVATYEIADSINLATLFPQDLFREKDNIQLRVFNYILYGNGKPTRGISDTSIQLVRTCLVLNWDQDNKNSSLEEVRSFFVEVSTKGLIRDFIRIGLVKSHISYIRKRQNPADSGLISADHMNPFYSISPKAGILQQSLRQNHGTIRMFLNRNKESQSLLILSSSNCFRIGPFNHVKYHNVINQSIKKNPIITIKNSSGPLGTAIQISNFYSFLPLLTYNQISVIKYLQLDNLKYIFQVINSYLIDENGRILNPDPYSNVVLNPFKLNWYFLHQNYHHNYCEETSTIISLGQFFCENVCIAKKEPHLKSGQVLIVERDSVVIRSAKPYLATPGAKVHGHYREILYEGDTLVTFIYEKSRSGDITQGLPKVEQVLEVRSIDSISLNLEKRIKGWNKCITRILGIPWGFLIGAELTIVQSRISLVNKIQKVYRSQGVQIHNRHIEIIVRQITSKVLVSEEGMSNVFLPGELIGLLQAERTGRALEEAICYRAILLGITRASLNTQSFISEASFQETARVLAKAALRGRIDWLKGLKENVVLGGVIPAGTGFNKGLVHCSRQHTNILLEKKTKNFSLFEGNMRDILFYHREFFDSSI</sequence>